<proteinExistence type="evidence at protein level"/>
<reference key="1">
    <citation type="journal article" date="1987" name="Cell">
        <title>Regulation of sexual differentiation in D. melanogaster via alternative splicing of RNA from the transformer gene.</title>
        <authorList>
            <person name="Boggs R.T."/>
            <person name="Gregor P."/>
            <person name="Idriss S."/>
            <person name="Belote J.M."/>
            <person name="McKeown M."/>
        </authorList>
    </citation>
    <scope>NUCLEOTIDE SEQUENCE [GENOMIC DNA]</scope>
    <scope>FUNCTION</scope>
</reference>
<reference key="2">
    <citation type="journal article" date="1994" name="Genetics">
        <title>Molecular population genetics of sex determination genes: the transformer gene of Drosophila melanogaster.</title>
        <authorList>
            <person name="Walthour C.S."/>
            <person name="Schaeffer S.W."/>
        </authorList>
    </citation>
    <scope>NUCLEOTIDE SEQUENCE [GENOMIC DNA]</scope>
</reference>
<reference key="3">
    <citation type="journal article" date="2003" name="Mol. Biol. Evol.">
        <title>Rapid evolution of the sex-determining gene, transformer: structural diversity and rate heterogeneity among sibling species of Drosophila.</title>
        <authorList>
            <person name="Kulathinal R.J."/>
            <person name="Skwarek L."/>
            <person name="Morton R.A."/>
            <person name="Singh R.S."/>
        </authorList>
    </citation>
    <scope>NUCLEOTIDE SEQUENCE [GENOMIC DNA]</scope>
    <source>
        <strain>14021-0231.0</strain>
        <strain>14021-0231.4</strain>
        <strain>14021-0231.6</strain>
        <strain>CPA129</strain>
        <strain>CPA46</strain>
        <strain>I-13</strain>
        <strain>Z(H)12</strain>
        <strain>Z(H)16</strain>
        <strain>Z(H)34</strain>
    </source>
</reference>
<reference key="4">
    <citation type="journal article" date="2000" name="Science">
        <title>The genome sequence of Drosophila melanogaster.</title>
        <authorList>
            <person name="Adams M.D."/>
            <person name="Celniker S.E."/>
            <person name="Holt R.A."/>
            <person name="Evans C.A."/>
            <person name="Gocayne J.D."/>
            <person name="Amanatides P.G."/>
            <person name="Scherer S.E."/>
            <person name="Li P.W."/>
            <person name="Hoskins R.A."/>
            <person name="Galle R.F."/>
            <person name="George R.A."/>
            <person name="Lewis S.E."/>
            <person name="Richards S."/>
            <person name="Ashburner M."/>
            <person name="Henderson S.N."/>
            <person name="Sutton G.G."/>
            <person name="Wortman J.R."/>
            <person name="Yandell M.D."/>
            <person name="Zhang Q."/>
            <person name="Chen L.X."/>
            <person name="Brandon R.C."/>
            <person name="Rogers Y.-H.C."/>
            <person name="Blazej R.G."/>
            <person name="Champe M."/>
            <person name="Pfeiffer B.D."/>
            <person name="Wan K.H."/>
            <person name="Doyle C."/>
            <person name="Baxter E.G."/>
            <person name="Helt G."/>
            <person name="Nelson C.R."/>
            <person name="Miklos G.L.G."/>
            <person name="Abril J.F."/>
            <person name="Agbayani A."/>
            <person name="An H.-J."/>
            <person name="Andrews-Pfannkoch C."/>
            <person name="Baldwin D."/>
            <person name="Ballew R.M."/>
            <person name="Basu A."/>
            <person name="Baxendale J."/>
            <person name="Bayraktaroglu L."/>
            <person name="Beasley E.M."/>
            <person name="Beeson K.Y."/>
            <person name="Benos P.V."/>
            <person name="Berman B.P."/>
            <person name="Bhandari D."/>
            <person name="Bolshakov S."/>
            <person name="Borkova D."/>
            <person name="Botchan M.R."/>
            <person name="Bouck J."/>
            <person name="Brokstein P."/>
            <person name="Brottier P."/>
            <person name="Burtis K.C."/>
            <person name="Busam D.A."/>
            <person name="Butler H."/>
            <person name="Cadieu E."/>
            <person name="Center A."/>
            <person name="Chandra I."/>
            <person name="Cherry J.M."/>
            <person name="Cawley S."/>
            <person name="Dahlke C."/>
            <person name="Davenport L.B."/>
            <person name="Davies P."/>
            <person name="de Pablos B."/>
            <person name="Delcher A."/>
            <person name="Deng Z."/>
            <person name="Mays A.D."/>
            <person name="Dew I."/>
            <person name="Dietz S.M."/>
            <person name="Dodson K."/>
            <person name="Doup L.E."/>
            <person name="Downes M."/>
            <person name="Dugan-Rocha S."/>
            <person name="Dunkov B.C."/>
            <person name="Dunn P."/>
            <person name="Durbin K.J."/>
            <person name="Evangelista C.C."/>
            <person name="Ferraz C."/>
            <person name="Ferriera S."/>
            <person name="Fleischmann W."/>
            <person name="Fosler C."/>
            <person name="Gabrielian A.E."/>
            <person name="Garg N.S."/>
            <person name="Gelbart W.M."/>
            <person name="Glasser K."/>
            <person name="Glodek A."/>
            <person name="Gong F."/>
            <person name="Gorrell J.H."/>
            <person name="Gu Z."/>
            <person name="Guan P."/>
            <person name="Harris M."/>
            <person name="Harris N.L."/>
            <person name="Harvey D.A."/>
            <person name="Heiman T.J."/>
            <person name="Hernandez J.R."/>
            <person name="Houck J."/>
            <person name="Hostin D."/>
            <person name="Houston K.A."/>
            <person name="Howland T.J."/>
            <person name="Wei M.-H."/>
            <person name="Ibegwam C."/>
            <person name="Jalali M."/>
            <person name="Kalush F."/>
            <person name="Karpen G.H."/>
            <person name="Ke Z."/>
            <person name="Kennison J.A."/>
            <person name="Ketchum K.A."/>
            <person name="Kimmel B.E."/>
            <person name="Kodira C.D."/>
            <person name="Kraft C.L."/>
            <person name="Kravitz S."/>
            <person name="Kulp D."/>
            <person name="Lai Z."/>
            <person name="Lasko P."/>
            <person name="Lei Y."/>
            <person name="Levitsky A.A."/>
            <person name="Li J.H."/>
            <person name="Li Z."/>
            <person name="Liang Y."/>
            <person name="Lin X."/>
            <person name="Liu X."/>
            <person name="Mattei B."/>
            <person name="McIntosh T.C."/>
            <person name="McLeod M.P."/>
            <person name="McPherson D."/>
            <person name="Merkulov G."/>
            <person name="Milshina N.V."/>
            <person name="Mobarry C."/>
            <person name="Morris J."/>
            <person name="Moshrefi A."/>
            <person name="Mount S.M."/>
            <person name="Moy M."/>
            <person name="Murphy B."/>
            <person name="Murphy L."/>
            <person name="Muzny D.M."/>
            <person name="Nelson D.L."/>
            <person name="Nelson D.R."/>
            <person name="Nelson K.A."/>
            <person name="Nixon K."/>
            <person name="Nusskern D.R."/>
            <person name="Pacleb J.M."/>
            <person name="Palazzolo M."/>
            <person name="Pittman G.S."/>
            <person name="Pan S."/>
            <person name="Pollard J."/>
            <person name="Puri V."/>
            <person name="Reese M.G."/>
            <person name="Reinert K."/>
            <person name="Remington K."/>
            <person name="Saunders R.D.C."/>
            <person name="Scheeler F."/>
            <person name="Shen H."/>
            <person name="Shue B.C."/>
            <person name="Siden-Kiamos I."/>
            <person name="Simpson M."/>
            <person name="Skupski M.P."/>
            <person name="Smith T.J."/>
            <person name="Spier E."/>
            <person name="Spradling A.C."/>
            <person name="Stapleton M."/>
            <person name="Strong R."/>
            <person name="Sun E."/>
            <person name="Svirskas R."/>
            <person name="Tector C."/>
            <person name="Turner R."/>
            <person name="Venter E."/>
            <person name="Wang A.H."/>
            <person name="Wang X."/>
            <person name="Wang Z.-Y."/>
            <person name="Wassarman D.A."/>
            <person name="Weinstock G.M."/>
            <person name="Weissenbach J."/>
            <person name="Williams S.M."/>
            <person name="Woodage T."/>
            <person name="Worley K.C."/>
            <person name="Wu D."/>
            <person name="Yang S."/>
            <person name="Yao Q.A."/>
            <person name="Ye J."/>
            <person name="Yeh R.-F."/>
            <person name="Zaveri J.S."/>
            <person name="Zhan M."/>
            <person name="Zhang G."/>
            <person name="Zhao Q."/>
            <person name="Zheng L."/>
            <person name="Zheng X.H."/>
            <person name="Zhong F.N."/>
            <person name="Zhong W."/>
            <person name="Zhou X."/>
            <person name="Zhu S.C."/>
            <person name="Zhu X."/>
            <person name="Smith H.O."/>
            <person name="Gibbs R.A."/>
            <person name="Myers E.W."/>
            <person name="Rubin G.M."/>
            <person name="Venter J.C."/>
        </authorList>
    </citation>
    <scope>NUCLEOTIDE SEQUENCE [LARGE SCALE GENOMIC DNA]</scope>
    <source>
        <strain>Berkeley</strain>
    </source>
</reference>
<reference key="5">
    <citation type="journal article" date="2002" name="Genome Biol.">
        <title>Annotation of the Drosophila melanogaster euchromatic genome: a systematic review.</title>
        <authorList>
            <person name="Misra S."/>
            <person name="Crosby M.A."/>
            <person name="Mungall C.J."/>
            <person name="Matthews B.B."/>
            <person name="Campbell K.S."/>
            <person name="Hradecky P."/>
            <person name="Huang Y."/>
            <person name="Kaminker J.S."/>
            <person name="Millburn G.H."/>
            <person name="Prochnik S.E."/>
            <person name="Smith C.D."/>
            <person name="Tupy J.L."/>
            <person name="Whitfield E.J."/>
            <person name="Bayraktaroglu L."/>
            <person name="Berman B.P."/>
            <person name="Bettencourt B.R."/>
            <person name="Celniker S.E."/>
            <person name="de Grey A.D.N.J."/>
            <person name="Drysdale R.A."/>
            <person name="Harris N.L."/>
            <person name="Richter J."/>
            <person name="Russo S."/>
            <person name="Schroeder A.J."/>
            <person name="Shu S.Q."/>
            <person name="Stapleton M."/>
            <person name="Yamada C."/>
            <person name="Ashburner M."/>
            <person name="Gelbart W.M."/>
            <person name="Rubin G.M."/>
            <person name="Lewis S.E."/>
        </authorList>
    </citation>
    <scope>GENOME REANNOTATION</scope>
    <source>
        <strain>Berkeley</strain>
    </source>
</reference>
<reference key="6">
    <citation type="journal article" date="1991" name="Cell">
        <title>Arginine/serine-rich domains of the su(wa) and tra RNA processing regulators target proteins to a subnuclear compartment implicated in splicing.</title>
        <authorList>
            <person name="Li H."/>
            <person name="Bingham P.M."/>
        </authorList>
    </citation>
    <scope>SUBCELLULAR LOCATION</scope>
    <scope>CHARACTERIZATION OF RS DOMAIN</scope>
</reference>
<reference key="7">
    <citation type="journal article" date="1993" name="Cell">
        <title>A splicing enhancer complex controls alternative splicing of doublesex pre-mRNA.</title>
        <authorList>
            <person name="Tian M."/>
            <person name="Maniatis T."/>
        </authorList>
    </citation>
    <scope>FUNCTION</scope>
    <scope>INTERACTION WITH SR PROTEINS IN ENHANCER COMPLEX</scope>
</reference>
<reference key="8">
    <citation type="journal article" date="1998" name="Mol. Cell. Biol.">
        <title>Regulation of sex-specific selection of fruitless 5' splice sites by transformer and transformer-2.</title>
        <authorList>
            <person name="Heinrichs V."/>
            <person name="Ryner L.C."/>
            <person name="Baker B.S."/>
        </authorList>
    </citation>
    <scope>FUNCTION</scope>
</reference>
<reference key="9">
    <citation type="journal article" date="1989" name="Cell">
        <title>Sex-specific alternative splicing of RNA from the transformer gene results from sequence-dependent splice site blockage.</title>
        <authorList>
            <person name="Sosnowski B.A."/>
            <person name="Belote J.M."/>
            <person name="McKeown M."/>
        </authorList>
    </citation>
    <scope>FUNCTION</scope>
</reference>
<reference key="10">
    <citation type="journal article" date="1990" name="Nature">
        <title>Binding of the Drosophila sex-lethal gene product to the alternative splice site of transformer primary transcript.</title>
        <authorList>
            <person name="Inoue K."/>
            <person name="Hoshijima K."/>
            <person name="Sakamoto H."/>
            <person name="Shimura Y."/>
        </authorList>
    </citation>
    <scope>FUNCTION</scope>
</reference>
<reference key="11">
    <citation type="journal article" date="1993" name="Nature">
        <title>The protein Sex-lethal antagonizes the splicing factor U2AF to regulate alternative splicing of transformer pre-mRNA.</title>
        <authorList>
            <person name="Valcarcel J."/>
            <person name="Singh R."/>
            <person name="Zamore P.D."/>
            <person name="Green M.R."/>
        </authorList>
    </citation>
    <scope>FUNCTION</scope>
</reference>
<keyword id="KW-0221">Differentiation</keyword>
<keyword id="KW-0539">Nucleus</keyword>
<keyword id="KW-1185">Reference proteome</keyword>
<keyword id="KW-0726">Sexual differentiation</keyword>
<gene>
    <name type="primary">tra</name>
    <name type="ORF">CG16724</name>
</gene>
<comment type="function">
    <text evidence="3 4 5 6 7 8">Member of the regulatory pathway controlling female somatic sexual differentiation, regulated by Sxl (PubMed:1690860, PubMed:2441872, PubMed:2503251, PubMed:7680770). Activates dsx female-specific splicing by promoting the formation of a splicing enhancer complex which consists of tra, tra2 and sr proteins (PubMed:8334698). Together with tra-2, plays a role in switching fru splicing from the male-specific pattern to the female-specific pattern through activation of the female-specific fru 5'-splice site (PubMed:9418892). No known function in males (PubMed:1690860, PubMed:2441872, PubMed:2503251, PubMed:7680770).</text>
</comment>
<comment type="subcellular location">
    <subcellularLocation>
        <location evidence="2">Nucleus speckle</location>
    </subcellularLocation>
    <text evidence="2">Speckled subnuclear compartment.</text>
</comment>
<comment type="induction">
    <text evidence="3 5 6">Transformer protein is only present in females due to sex-specific alternative mRNA splicing of tra pre-mRNA (PubMed:1690860, PubMed:2503251, PubMed:7680770). Female-specific alternative splicing of tra pre-mRNA is controlled by Sxl, which binds tightly to a characteristic uridine-rich polypyrimidine tract at the non-sex specific 3' splice site in one of the tra introns, preventing the general splicing factor U2AF from binding to this site and forcing it to bind to the female-specific 3' splice site (PubMed:1690860, PubMed:2503251, PubMed:7680770). As consequence, only the female-specific transcripts are translated, while non-sex-specific RNA expressed in males is not translated (PubMed:1690860, PubMed:2503251, PubMed:7680770).</text>
</comment>
<comment type="domain">
    <text evidence="2">RS domain directs localization of proteins to the speckled subnuclear compartment and the purpose of this localization is to allow colocalization and co-concentration of components of the splicing and splicing regulatory machinery to permit relatively high rates and/or efficiencies of reaction and interaction.</text>
</comment>
<comment type="caution">
    <text evidence="9">It is uncertain whether Met-1 or Met-3 is the initiator.</text>
</comment>
<sequence>MKMDADSSGTQHRDSRGSRSRSRREREYHGRSSERDSRKKEHKIPYFADEVREQDRLRRLRQRAHQSTRRTRSRSRSQSSIRESRHRRHRQRSRSRNRSRSRSSERKRRQRSRSRSSERRRRQRSPHRYNPPPKIINYYVQVPPQDFYGMSGMQQSFGYQRLPRPPPFPPAPYRYRQRPPFIGVPRFGYRNAGRPPY</sequence>
<evidence type="ECO:0000256" key="1">
    <source>
        <dbReference type="SAM" id="MobiDB-lite"/>
    </source>
</evidence>
<evidence type="ECO:0000269" key="2">
    <source>
    </source>
</evidence>
<evidence type="ECO:0000269" key="3">
    <source>
    </source>
</evidence>
<evidence type="ECO:0000269" key="4">
    <source>
    </source>
</evidence>
<evidence type="ECO:0000269" key="5">
    <source>
    </source>
</evidence>
<evidence type="ECO:0000269" key="6">
    <source>
    </source>
</evidence>
<evidence type="ECO:0000269" key="7">
    <source>
    </source>
</evidence>
<evidence type="ECO:0000269" key="8">
    <source>
    </source>
</evidence>
<evidence type="ECO:0000305" key="9"/>
<organism>
    <name type="scientific">Drosophila melanogaster</name>
    <name type="common">Fruit fly</name>
    <dbReference type="NCBI Taxonomy" id="7227"/>
    <lineage>
        <taxon>Eukaryota</taxon>
        <taxon>Metazoa</taxon>
        <taxon>Ecdysozoa</taxon>
        <taxon>Arthropoda</taxon>
        <taxon>Hexapoda</taxon>
        <taxon>Insecta</taxon>
        <taxon>Pterygota</taxon>
        <taxon>Neoptera</taxon>
        <taxon>Endopterygota</taxon>
        <taxon>Diptera</taxon>
        <taxon>Brachycera</taxon>
        <taxon>Muscomorpha</taxon>
        <taxon>Ephydroidea</taxon>
        <taxon>Drosophilidae</taxon>
        <taxon>Drosophila</taxon>
        <taxon>Sophophora</taxon>
    </lineage>
</organism>
<feature type="chain" id="PRO_0000065645" description="Female-specific protein transformer">
    <location>
        <begin position="1"/>
        <end position="197"/>
    </location>
</feature>
<feature type="region of interest" description="Disordered" evidence="1">
    <location>
        <begin position="1"/>
        <end position="136"/>
    </location>
</feature>
<feature type="region of interest" description="Disordered" evidence="1">
    <location>
        <begin position="158"/>
        <end position="197"/>
    </location>
</feature>
<feature type="compositionally biased region" description="Basic and acidic residues" evidence="1">
    <location>
        <begin position="1"/>
        <end position="17"/>
    </location>
</feature>
<feature type="compositionally biased region" description="Basic and acidic residues" evidence="1">
    <location>
        <begin position="24"/>
        <end position="39"/>
    </location>
</feature>
<feature type="compositionally biased region" description="Basic residues" evidence="1">
    <location>
        <begin position="58"/>
        <end position="75"/>
    </location>
</feature>
<feature type="compositionally biased region" description="Basic residues" evidence="1">
    <location>
        <begin position="84"/>
        <end position="127"/>
    </location>
</feature>
<feature type="compositionally biased region" description="Pro residues" evidence="1">
    <location>
        <begin position="163"/>
        <end position="172"/>
    </location>
</feature>
<feature type="sequence variant" description="In strain: 14021-0231.6.">
    <original>R</original>
    <variation>M</variation>
    <location>
        <position position="94"/>
    </location>
</feature>
<feature type="sequence conflict" description="In Ref. 4; AAF49441." evidence="9" ref="4">
    <original>S</original>
    <variation>N</variation>
    <location>
        <position position="99"/>
    </location>
</feature>
<feature type="sequence conflict" description="In Ref. 4; AAF49441." evidence="9" ref="4">
    <original>R</original>
    <variation>H</variation>
    <location>
        <position position="111"/>
    </location>
</feature>
<accession>P11596</accession>
<accession>Q540G8</accession>
<accession>Q86LR9</accession>
<accession>Q9VV78</accession>
<protein>
    <recommendedName>
        <fullName>Female-specific protein transformer</fullName>
    </recommendedName>
</protein>
<dbReference type="EMBL" id="M17478">
    <property type="protein sequence ID" value="AAB59226.1"/>
    <property type="molecule type" value="Genomic_DNA"/>
</dbReference>
<dbReference type="EMBL" id="L19464">
    <property type="protein sequence ID" value="AAA75340.1"/>
    <property type="molecule type" value="Genomic_DNA"/>
</dbReference>
<dbReference type="EMBL" id="L19465">
    <property type="protein sequence ID" value="AAA75341.1"/>
    <property type="molecule type" value="Genomic_DNA"/>
</dbReference>
<dbReference type="EMBL" id="L19466">
    <property type="protein sequence ID" value="AAA75342.1"/>
    <property type="molecule type" value="Genomic_DNA"/>
</dbReference>
<dbReference type="EMBL" id="L19467">
    <property type="protein sequence ID" value="AAA28958.1"/>
    <property type="molecule type" value="Genomic_DNA"/>
</dbReference>
<dbReference type="EMBL" id="L19468">
    <property type="protein sequence ID" value="AAA28959.1"/>
    <property type="molecule type" value="Genomic_DNA"/>
</dbReference>
<dbReference type="EMBL" id="L19469">
    <property type="protein sequence ID" value="AAA28960.1"/>
    <property type="molecule type" value="Genomic_DNA"/>
</dbReference>
<dbReference type="EMBL" id="L19470">
    <property type="protein sequence ID" value="AAA28961.1"/>
    <property type="molecule type" value="Genomic_DNA"/>
</dbReference>
<dbReference type="EMBL" id="L19618">
    <property type="protein sequence ID" value="AAA28962.1"/>
    <property type="molecule type" value="Genomic_DNA"/>
</dbReference>
<dbReference type="EMBL" id="L19619">
    <property type="protein sequence ID" value="AAA28963.1"/>
    <property type="molecule type" value="Genomic_DNA"/>
</dbReference>
<dbReference type="EMBL" id="L19620">
    <property type="protein sequence ID" value="AAA28964.1"/>
    <property type="molecule type" value="Genomic_DNA"/>
</dbReference>
<dbReference type="EMBL" id="AY183383">
    <property type="protein sequence ID" value="AAO38891.1"/>
    <property type="molecule type" value="Genomic_DNA"/>
</dbReference>
<dbReference type="EMBL" id="AY183385">
    <property type="protein sequence ID" value="AAO38893.1"/>
    <property type="molecule type" value="Genomic_DNA"/>
</dbReference>
<dbReference type="EMBL" id="AY183386">
    <property type="protein sequence ID" value="AAO38894.1"/>
    <property type="molecule type" value="Genomic_DNA"/>
</dbReference>
<dbReference type="EMBL" id="AY183387">
    <property type="protein sequence ID" value="AAO38895.1"/>
    <property type="molecule type" value="Genomic_DNA"/>
</dbReference>
<dbReference type="EMBL" id="AY183388">
    <property type="protein sequence ID" value="AAO38896.1"/>
    <property type="molecule type" value="Genomic_DNA"/>
</dbReference>
<dbReference type="EMBL" id="AY183389">
    <property type="protein sequence ID" value="AAO38897.1"/>
    <property type="molecule type" value="Genomic_DNA"/>
</dbReference>
<dbReference type="EMBL" id="AY183390">
    <property type="protein sequence ID" value="AAO38898.1"/>
    <property type="molecule type" value="Genomic_DNA"/>
</dbReference>
<dbReference type="EMBL" id="AY183382">
    <property type="protein sequence ID" value="AAO38890.1"/>
    <property type="molecule type" value="Genomic_DNA"/>
</dbReference>
<dbReference type="EMBL" id="AY183384">
    <property type="protein sequence ID" value="AAO38892.1"/>
    <property type="molecule type" value="Genomic_DNA"/>
</dbReference>
<dbReference type="EMBL" id="AE014296">
    <property type="protein sequence ID" value="AAF49441.1"/>
    <property type="molecule type" value="Genomic_DNA"/>
</dbReference>
<dbReference type="PIR" id="A29648">
    <property type="entry name" value="A29648"/>
</dbReference>
<dbReference type="RefSeq" id="NP_524114.1">
    <property type="nucleotide sequence ID" value="NM_079390.3"/>
</dbReference>
<dbReference type="BioGRID" id="65151">
    <property type="interactions" value="14"/>
</dbReference>
<dbReference type="FunCoup" id="P11596">
    <property type="interactions" value="3"/>
</dbReference>
<dbReference type="STRING" id="7227.FBpp0075123"/>
<dbReference type="PaxDb" id="7227-FBpp0075123"/>
<dbReference type="EnsemblMetazoa" id="FBtr0075364">
    <property type="protein sequence ID" value="FBpp0075123"/>
    <property type="gene ID" value="FBgn0003741"/>
</dbReference>
<dbReference type="GeneID" id="39849"/>
<dbReference type="KEGG" id="dme:Dmel_CG16724"/>
<dbReference type="UCSC" id="CG16724-RA">
    <property type="organism name" value="d. melanogaster"/>
</dbReference>
<dbReference type="AGR" id="FB:FBgn0003741"/>
<dbReference type="CTD" id="6955"/>
<dbReference type="FlyBase" id="FBgn0003741">
    <property type="gene designation" value="tra"/>
</dbReference>
<dbReference type="VEuPathDB" id="VectorBase:FBgn0003741"/>
<dbReference type="HOGENOM" id="CLU_130078_0_0_1"/>
<dbReference type="InParanoid" id="P11596"/>
<dbReference type="OrthoDB" id="7871011at2759"/>
<dbReference type="BioGRID-ORCS" id="39849">
    <property type="hits" value="0 hits in 1 CRISPR screen"/>
</dbReference>
<dbReference type="GenomeRNAi" id="39849"/>
<dbReference type="PRO" id="PR:P11596"/>
<dbReference type="Proteomes" id="UP000000803">
    <property type="component" value="Chromosome 3L"/>
</dbReference>
<dbReference type="Bgee" id="FBgn0003741">
    <property type="expression patterns" value="Expressed in midgut large flat cell (Drosophila) in digestive tract and 151 other cell types or tissues"/>
</dbReference>
<dbReference type="ExpressionAtlas" id="P11596">
    <property type="expression patterns" value="baseline and differential"/>
</dbReference>
<dbReference type="GO" id="GO:0016607">
    <property type="term" value="C:nuclear speck"/>
    <property type="evidence" value="ECO:0007669"/>
    <property type="project" value="UniProtKB-SubCell"/>
</dbReference>
<dbReference type="GO" id="GO:0036002">
    <property type="term" value="F:pre-mRNA binding"/>
    <property type="evidence" value="ECO:0000314"/>
    <property type="project" value="FlyBase"/>
</dbReference>
<dbReference type="GO" id="GO:0030154">
    <property type="term" value="P:cell differentiation"/>
    <property type="evidence" value="ECO:0007669"/>
    <property type="project" value="UniProtKB-KW"/>
</dbReference>
<dbReference type="GO" id="GO:1990399">
    <property type="term" value="P:epithelium regeneration"/>
    <property type="evidence" value="ECO:0000315"/>
    <property type="project" value="FlyBase"/>
</dbReference>
<dbReference type="GO" id="GO:0030237">
    <property type="term" value="P:female sex determination"/>
    <property type="evidence" value="ECO:0000314"/>
    <property type="project" value="UniProtKB"/>
</dbReference>
<dbReference type="GO" id="GO:0046660">
    <property type="term" value="P:female sex differentiation"/>
    <property type="evidence" value="ECO:0000314"/>
    <property type="project" value="FlyBase"/>
</dbReference>
<dbReference type="GO" id="GO:0000398">
    <property type="term" value="P:mRNA splicing, via spliceosome"/>
    <property type="evidence" value="ECO:0000314"/>
    <property type="project" value="FlyBase"/>
</dbReference>
<dbReference type="GO" id="GO:2000035">
    <property type="term" value="P:regulation of stem cell division"/>
    <property type="evidence" value="ECO:0000315"/>
    <property type="project" value="FlyBase"/>
</dbReference>
<dbReference type="InterPro" id="IPR010519">
    <property type="entry name" value="Tra"/>
</dbReference>
<dbReference type="Pfam" id="PF06495">
    <property type="entry name" value="Transformer"/>
    <property type="match status" value="1"/>
</dbReference>
<name>TRSF_DROME</name>